<accession>Q6G994</accession>
<comment type="function">
    <text evidence="1">Major role in the synthesis of nucleoside triphosphates other than ATP. The ATP gamma phosphate is transferred to the NDP beta phosphate via a ping-pong mechanism, using a phosphorylated active-site intermediate.</text>
</comment>
<comment type="catalytic activity">
    <reaction evidence="1">
        <text>a 2'-deoxyribonucleoside 5'-diphosphate + ATP = a 2'-deoxyribonucleoside 5'-triphosphate + ADP</text>
        <dbReference type="Rhea" id="RHEA:44640"/>
        <dbReference type="ChEBI" id="CHEBI:30616"/>
        <dbReference type="ChEBI" id="CHEBI:61560"/>
        <dbReference type="ChEBI" id="CHEBI:73316"/>
        <dbReference type="ChEBI" id="CHEBI:456216"/>
        <dbReference type="EC" id="2.7.4.6"/>
    </reaction>
</comment>
<comment type="catalytic activity">
    <reaction evidence="1">
        <text>a ribonucleoside 5'-diphosphate + ATP = a ribonucleoside 5'-triphosphate + ADP</text>
        <dbReference type="Rhea" id="RHEA:18113"/>
        <dbReference type="ChEBI" id="CHEBI:30616"/>
        <dbReference type="ChEBI" id="CHEBI:57930"/>
        <dbReference type="ChEBI" id="CHEBI:61557"/>
        <dbReference type="ChEBI" id="CHEBI:456216"/>
        <dbReference type="EC" id="2.7.4.6"/>
    </reaction>
</comment>
<comment type="cofactor">
    <cofactor evidence="1">
        <name>Mg(2+)</name>
        <dbReference type="ChEBI" id="CHEBI:18420"/>
    </cofactor>
</comment>
<comment type="subunit">
    <text evidence="1">Homotetramer.</text>
</comment>
<comment type="subcellular location">
    <subcellularLocation>
        <location evidence="1">Cytoplasm</location>
    </subcellularLocation>
</comment>
<comment type="similarity">
    <text evidence="1">Belongs to the NDK family.</text>
</comment>
<sequence length="149" mass="16561">MERTFLMIKPDAVQRNLIGEVISRIERKGLKLVGGKLMQVPMELAETHYGEHQGKPFYNDLISFITSAPVFAMVVEGEDAVNVSRHIIGSTNPSEASPGSIRGDLGLTVGRNIIHGSDSLDSAEREINLWFNENEITSYASPRDAWLYE</sequence>
<gene>
    <name evidence="1" type="primary">ndk</name>
    <name type="ordered locus">SAS1410</name>
</gene>
<proteinExistence type="inferred from homology"/>
<protein>
    <recommendedName>
        <fullName evidence="1">Nucleoside diphosphate kinase</fullName>
        <shortName evidence="1">NDK</shortName>
        <shortName evidence="1">NDP kinase</shortName>
        <ecNumber evidence="1">2.7.4.6</ecNumber>
    </recommendedName>
    <alternativeName>
        <fullName evidence="1">Nucleoside-2-P kinase</fullName>
    </alternativeName>
</protein>
<reference key="1">
    <citation type="journal article" date="2004" name="Proc. Natl. Acad. Sci. U.S.A.">
        <title>Complete genomes of two clinical Staphylococcus aureus strains: evidence for the rapid evolution of virulence and drug resistance.</title>
        <authorList>
            <person name="Holden M.T.G."/>
            <person name="Feil E.J."/>
            <person name="Lindsay J.A."/>
            <person name="Peacock S.J."/>
            <person name="Day N.P.J."/>
            <person name="Enright M.C."/>
            <person name="Foster T.J."/>
            <person name="Moore C.E."/>
            <person name="Hurst L."/>
            <person name="Atkin R."/>
            <person name="Barron A."/>
            <person name="Bason N."/>
            <person name="Bentley S.D."/>
            <person name="Chillingworth C."/>
            <person name="Chillingworth T."/>
            <person name="Churcher C."/>
            <person name="Clark L."/>
            <person name="Corton C."/>
            <person name="Cronin A."/>
            <person name="Doggett J."/>
            <person name="Dowd L."/>
            <person name="Feltwell T."/>
            <person name="Hance Z."/>
            <person name="Harris B."/>
            <person name="Hauser H."/>
            <person name="Holroyd S."/>
            <person name="Jagels K."/>
            <person name="James K.D."/>
            <person name="Lennard N."/>
            <person name="Line A."/>
            <person name="Mayes R."/>
            <person name="Moule S."/>
            <person name="Mungall K."/>
            <person name="Ormond D."/>
            <person name="Quail M.A."/>
            <person name="Rabbinowitsch E."/>
            <person name="Rutherford K.M."/>
            <person name="Sanders M."/>
            <person name="Sharp S."/>
            <person name="Simmonds M."/>
            <person name="Stevens K."/>
            <person name="Whitehead S."/>
            <person name="Barrell B.G."/>
            <person name="Spratt B.G."/>
            <person name="Parkhill J."/>
        </authorList>
    </citation>
    <scope>NUCLEOTIDE SEQUENCE [LARGE SCALE GENOMIC DNA]</scope>
    <source>
        <strain>MSSA476</strain>
    </source>
</reference>
<feature type="chain" id="PRO_0000137048" description="Nucleoside diphosphate kinase">
    <location>
        <begin position="1"/>
        <end position="149"/>
    </location>
</feature>
<feature type="active site" description="Pros-phosphohistidine intermediate" evidence="1">
    <location>
        <position position="115"/>
    </location>
</feature>
<feature type="binding site" evidence="1">
    <location>
        <position position="9"/>
    </location>
    <ligand>
        <name>ATP</name>
        <dbReference type="ChEBI" id="CHEBI:30616"/>
    </ligand>
</feature>
<feature type="binding site" evidence="1">
    <location>
        <position position="57"/>
    </location>
    <ligand>
        <name>ATP</name>
        <dbReference type="ChEBI" id="CHEBI:30616"/>
    </ligand>
</feature>
<feature type="binding site" evidence="1">
    <location>
        <position position="85"/>
    </location>
    <ligand>
        <name>ATP</name>
        <dbReference type="ChEBI" id="CHEBI:30616"/>
    </ligand>
</feature>
<feature type="binding site" evidence="1">
    <location>
        <position position="91"/>
    </location>
    <ligand>
        <name>ATP</name>
        <dbReference type="ChEBI" id="CHEBI:30616"/>
    </ligand>
</feature>
<feature type="binding site" evidence="1">
    <location>
        <position position="102"/>
    </location>
    <ligand>
        <name>ATP</name>
        <dbReference type="ChEBI" id="CHEBI:30616"/>
    </ligand>
</feature>
<feature type="binding site" evidence="1">
    <location>
        <position position="112"/>
    </location>
    <ligand>
        <name>ATP</name>
        <dbReference type="ChEBI" id="CHEBI:30616"/>
    </ligand>
</feature>
<organism>
    <name type="scientific">Staphylococcus aureus (strain MSSA476)</name>
    <dbReference type="NCBI Taxonomy" id="282459"/>
    <lineage>
        <taxon>Bacteria</taxon>
        <taxon>Bacillati</taxon>
        <taxon>Bacillota</taxon>
        <taxon>Bacilli</taxon>
        <taxon>Bacillales</taxon>
        <taxon>Staphylococcaceae</taxon>
        <taxon>Staphylococcus</taxon>
    </lineage>
</organism>
<keyword id="KW-0067">ATP-binding</keyword>
<keyword id="KW-0963">Cytoplasm</keyword>
<keyword id="KW-0418">Kinase</keyword>
<keyword id="KW-0460">Magnesium</keyword>
<keyword id="KW-0479">Metal-binding</keyword>
<keyword id="KW-0546">Nucleotide metabolism</keyword>
<keyword id="KW-0547">Nucleotide-binding</keyword>
<keyword id="KW-0597">Phosphoprotein</keyword>
<keyword id="KW-0808">Transferase</keyword>
<evidence type="ECO:0000255" key="1">
    <source>
        <dbReference type="HAMAP-Rule" id="MF_00451"/>
    </source>
</evidence>
<name>NDK_STAAS</name>
<dbReference type="EC" id="2.7.4.6" evidence="1"/>
<dbReference type="EMBL" id="BX571857">
    <property type="protein sequence ID" value="CAG43187.1"/>
    <property type="molecule type" value="Genomic_DNA"/>
</dbReference>
<dbReference type="RefSeq" id="WP_000442479.1">
    <property type="nucleotide sequence ID" value="NC_002953.3"/>
</dbReference>
<dbReference type="SMR" id="Q6G994"/>
<dbReference type="KEGG" id="sas:SAS1410"/>
<dbReference type="HOGENOM" id="CLU_060216_6_3_9"/>
<dbReference type="GO" id="GO:0005737">
    <property type="term" value="C:cytoplasm"/>
    <property type="evidence" value="ECO:0007669"/>
    <property type="project" value="UniProtKB-SubCell"/>
</dbReference>
<dbReference type="GO" id="GO:0005524">
    <property type="term" value="F:ATP binding"/>
    <property type="evidence" value="ECO:0007669"/>
    <property type="project" value="UniProtKB-UniRule"/>
</dbReference>
<dbReference type="GO" id="GO:0046872">
    <property type="term" value="F:metal ion binding"/>
    <property type="evidence" value="ECO:0007669"/>
    <property type="project" value="UniProtKB-KW"/>
</dbReference>
<dbReference type="GO" id="GO:0004550">
    <property type="term" value="F:nucleoside diphosphate kinase activity"/>
    <property type="evidence" value="ECO:0007669"/>
    <property type="project" value="UniProtKB-UniRule"/>
</dbReference>
<dbReference type="GO" id="GO:0006241">
    <property type="term" value="P:CTP biosynthetic process"/>
    <property type="evidence" value="ECO:0007669"/>
    <property type="project" value="UniProtKB-UniRule"/>
</dbReference>
<dbReference type="GO" id="GO:0006183">
    <property type="term" value="P:GTP biosynthetic process"/>
    <property type="evidence" value="ECO:0007669"/>
    <property type="project" value="UniProtKB-UniRule"/>
</dbReference>
<dbReference type="GO" id="GO:0006228">
    <property type="term" value="P:UTP biosynthetic process"/>
    <property type="evidence" value="ECO:0007669"/>
    <property type="project" value="UniProtKB-UniRule"/>
</dbReference>
<dbReference type="CDD" id="cd04413">
    <property type="entry name" value="NDPk_I"/>
    <property type="match status" value="1"/>
</dbReference>
<dbReference type="FunFam" id="3.30.70.141:FF:000002">
    <property type="entry name" value="Nucleoside diphosphate kinase"/>
    <property type="match status" value="1"/>
</dbReference>
<dbReference type="Gene3D" id="3.30.70.141">
    <property type="entry name" value="Nucleoside diphosphate kinase-like domain"/>
    <property type="match status" value="1"/>
</dbReference>
<dbReference type="HAMAP" id="MF_00451">
    <property type="entry name" value="NDP_kinase"/>
    <property type="match status" value="1"/>
</dbReference>
<dbReference type="InterPro" id="IPR034907">
    <property type="entry name" value="NDK-like_dom"/>
</dbReference>
<dbReference type="InterPro" id="IPR036850">
    <property type="entry name" value="NDK-like_dom_sf"/>
</dbReference>
<dbReference type="InterPro" id="IPR001564">
    <property type="entry name" value="Nucleoside_diP_kinase"/>
</dbReference>
<dbReference type="InterPro" id="IPR023005">
    <property type="entry name" value="Nucleoside_diP_kinase_AS"/>
</dbReference>
<dbReference type="NCBIfam" id="NF001908">
    <property type="entry name" value="PRK00668.1"/>
    <property type="match status" value="1"/>
</dbReference>
<dbReference type="PANTHER" id="PTHR11349">
    <property type="entry name" value="NUCLEOSIDE DIPHOSPHATE KINASE"/>
    <property type="match status" value="1"/>
</dbReference>
<dbReference type="Pfam" id="PF00334">
    <property type="entry name" value="NDK"/>
    <property type="match status" value="1"/>
</dbReference>
<dbReference type="PRINTS" id="PR01243">
    <property type="entry name" value="NUCDPKINASE"/>
</dbReference>
<dbReference type="SMART" id="SM00562">
    <property type="entry name" value="NDK"/>
    <property type="match status" value="1"/>
</dbReference>
<dbReference type="SUPFAM" id="SSF54919">
    <property type="entry name" value="Nucleoside diphosphate kinase, NDK"/>
    <property type="match status" value="1"/>
</dbReference>
<dbReference type="PROSITE" id="PS00469">
    <property type="entry name" value="NDPK"/>
    <property type="match status" value="1"/>
</dbReference>
<dbReference type="PROSITE" id="PS51374">
    <property type="entry name" value="NDPK_LIKE"/>
    <property type="match status" value="1"/>
</dbReference>